<keyword id="KW-0219">Diabetes mellitus</keyword>
<keyword id="KW-0597">Phosphoprotein</keyword>
<keyword id="KW-1267">Proteomics identification</keyword>
<keyword id="KW-1185">Reference proteome</keyword>
<keyword id="KW-0727">SH2 domain</keyword>
<evidence type="ECO:0000250" key="1"/>
<evidence type="ECO:0000250" key="2">
    <source>
        <dbReference type="UniProtKB" id="O09039"/>
    </source>
</evidence>
<evidence type="ECO:0000255" key="3">
    <source>
        <dbReference type="PROSITE-ProRule" id="PRU00191"/>
    </source>
</evidence>
<evidence type="ECO:0000256" key="4">
    <source>
        <dbReference type="SAM" id="MobiDB-lite"/>
    </source>
</evidence>
<evidence type="ECO:0000269" key="5">
    <source>
    </source>
</evidence>
<evidence type="ECO:0000269" key="6">
    <source>
    </source>
</evidence>
<evidence type="ECO:0000269" key="7">
    <source>
    </source>
</evidence>
<evidence type="ECO:0000305" key="8"/>
<evidence type="ECO:0007744" key="9">
    <source>
    </source>
</evidence>
<evidence type="ECO:0007744" key="10">
    <source>
    </source>
</evidence>
<gene>
    <name type="primary">SH2B3</name>
    <name type="synonym">LNK</name>
</gene>
<proteinExistence type="evidence at protein level"/>
<accession>Q9UQQ2</accession>
<accession>B9EGG5</accession>
<accession>O95184</accession>
<comment type="function">
    <text evidence="1">Links T-cell receptor activation signal to phospholipase C-gamma-1, GRB2 and phosphatidylinositol 3-kinase.</text>
</comment>
<comment type="subunit">
    <text>Binds to the tyrosine-phosphorylated TCR zeta chain via its SH2 domain.</text>
</comment>
<comment type="interaction">
    <interactant intactId="EBI-7879749">
        <id>Q9UQQ2</id>
    </interactant>
    <interactant intactId="EBI-297353">
        <id>P00533</id>
        <label>EGFR</label>
    </interactant>
    <organismsDiffer>false</organismsDiffer>
    <experiments>2</experiments>
</comment>
<comment type="interaction">
    <interactant intactId="EBI-7879749">
        <id>Q9UQQ2</id>
    </interactant>
    <interactant intactId="EBI-720706">
        <id>P21860</id>
        <label>ERBB3</label>
    </interactant>
    <organismsDiffer>false</organismsDiffer>
    <experiments>2</experiments>
</comment>
<comment type="interaction">
    <interactant intactId="EBI-7879749">
        <id>Q9UQQ2</id>
    </interactant>
    <interactant intactId="EBI-1379503">
        <id>P10721</id>
        <label>KIT</label>
    </interactant>
    <organismsDiffer>false</organismsDiffer>
    <experiments>2</experiments>
</comment>
<comment type="interaction">
    <interactant intactId="EBI-7879749">
        <id>Q9UQQ2</id>
    </interactant>
    <interactant intactId="EBI-1039152">
        <id>P08581</id>
        <label>MET</label>
    </interactant>
    <organismsDiffer>false</organismsDiffer>
    <experiments>2</experiments>
</comment>
<comment type="tissue specificity">
    <text>Preferentially expressed by lymphoid cell lines.</text>
</comment>
<comment type="PTM">
    <text>Tyrosine phosphorylated by LCK.</text>
</comment>
<comment type="disease" evidence="6">
    <disease id="DI-02885">
        <name>Celiac disease 13</name>
        <acronym>CELIAC13</acronym>
        <description>A multifactorial, chronic disorder of the small intestine caused by intolerance to gluten. It is characterized by immune-mediated enteropathy associated with failed intestinal absorption, and malnutrition. In predisposed individuals, the ingestion of gluten-containing food such as wheat and rye induces a flat jejunal mucosa with infiltration of lymphocytes.</description>
        <dbReference type="MIM" id="612011"/>
    </disease>
    <text>Disease susceptibility is associated with variants affecting the gene represented in this entry.</text>
</comment>
<comment type="disease" evidence="5">
    <disease id="DI-01826">
        <name>Type 1 diabetes mellitus</name>
        <acronym>T1D</acronym>
        <description>A multifactorial disorder of glucose homeostasis that is characterized by susceptibility to ketoacidosis in the absence of insulin therapy. Clinical features are polydipsia, polyphagia and polyuria which result from hyperglycemia-induced osmotic diuresis and secondary thirst. These derangements result in long-term complications that affect the eyes, kidneys, nerves, and blood vessels.</description>
        <dbReference type="MIM" id="222100"/>
    </disease>
    <text>Disease susceptibility may be associated with variants affecting the gene represented in this entry.</text>
</comment>
<comment type="similarity">
    <text evidence="8">Belongs to the SH2B adapter family.</text>
</comment>
<dbReference type="EMBL" id="AF055581">
    <property type="protein sequence ID" value="AAC71695.1"/>
    <property type="molecule type" value="mRNA"/>
</dbReference>
<dbReference type="EMBL" id="AJ012793">
    <property type="protein sequence ID" value="CAB42642.1"/>
    <property type="molecule type" value="mRNA"/>
</dbReference>
<dbReference type="EMBL" id="CH471054">
    <property type="protein sequence ID" value="EAW97955.1"/>
    <property type="molecule type" value="Genomic_DNA"/>
</dbReference>
<dbReference type="EMBL" id="BC136451">
    <property type="protein sequence ID" value="AAI36452.1"/>
    <property type="molecule type" value="mRNA"/>
</dbReference>
<dbReference type="CCDS" id="CCDS9153.1"/>
<dbReference type="RefSeq" id="NP_001278353.1">
    <property type="nucleotide sequence ID" value="NM_001291424.1"/>
</dbReference>
<dbReference type="RefSeq" id="NP_005466.1">
    <property type="nucleotide sequence ID" value="NM_005475.3"/>
</dbReference>
<dbReference type="RefSeq" id="XP_047283982.1">
    <property type="nucleotide sequence ID" value="XM_047428026.1"/>
</dbReference>
<dbReference type="SMR" id="Q9UQQ2"/>
<dbReference type="BioGRID" id="115336">
    <property type="interactions" value="24"/>
</dbReference>
<dbReference type="FunCoup" id="Q9UQQ2">
    <property type="interactions" value="1015"/>
</dbReference>
<dbReference type="IntAct" id="Q9UQQ2">
    <property type="interactions" value="40"/>
</dbReference>
<dbReference type="MINT" id="Q9UQQ2"/>
<dbReference type="STRING" id="9606.ENSP00000345492"/>
<dbReference type="DrugBank" id="DB06589">
    <property type="generic name" value="Pazopanib"/>
</dbReference>
<dbReference type="GlyGen" id="Q9UQQ2">
    <property type="glycosylation" value="1 site"/>
</dbReference>
<dbReference type="iPTMnet" id="Q9UQQ2"/>
<dbReference type="PhosphoSitePlus" id="Q9UQQ2"/>
<dbReference type="BioMuta" id="SH2B3"/>
<dbReference type="DMDM" id="13628527"/>
<dbReference type="jPOST" id="Q9UQQ2"/>
<dbReference type="MassIVE" id="Q9UQQ2"/>
<dbReference type="PaxDb" id="9606-ENSP00000345492"/>
<dbReference type="PeptideAtlas" id="Q9UQQ2"/>
<dbReference type="ProteomicsDB" id="85571"/>
<dbReference type="Antibodypedia" id="1179">
    <property type="antibodies" value="271 antibodies from 35 providers"/>
</dbReference>
<dbReference type="DNASU" id="10019"/>
<dbReference type="Ensembl" id="ENST00000341259.7">
    <property type="protein sequence ID" value="ENSP00000345492.2"/>
    <property type="gene ID" value="ENSG00000111252.11"/>
</dbReference>
<dbReference type="GeneID" id="10019"/>
<dbReference type="KEGG" id="hsa:10019"/>
<dbReference type="MANE-Select" id="ENST00000341259.7">
    <property type="protein sequence ID" value="ENSP00000345492.2"/>
    <property type="RefSeq nucleotide sequence ID" value="NM_005475.3"/>
    <property type="RefSeq protein sequence ID" value="NP_005466.1"/>
</dbReference>
<dbReference type="UCSC" id="uc001tse.3">
    <property type="organism name" value="human"/>
</dbReference>
<dbReference type="AGR" id="HGNC:29605"/>
<dbReference type="CTD" id="10019"/>
<dbReference type="DisGeNET" id="10019"/>
<dbReference type="GeneCards" id="SH2B3"/>
<dbReference type="HGNC" id="HGNC:29605">
    <property type="gene designation" value="SH2B3"/>
</dbReference>
<dbReference type="HPA" id="ENSG00000111252">
    <property type="expression patterns" value="Tissue enhanced (bone)"/>
</dbReference>
<dbReference type="MalaCards" id="SH2B3"/>
<dbReference type="MIM" id="222100">
    <property type="type" value="phenotype"/>
</dbReference>
<dbReference type="MIM" id="605093">
    <property type="type" value="gene"/>
</dbReference>
<dbReference type="MIM" id="612011">
    <property type="type" value="phenotype"/>
</dbReference>
<dbReference type="neXtProt" id="NX_Q9UQQ2"/>
<dbReference type="OpenTargets" id="ENSG00000111252"/>
<dbReference type="Orphanet" id="3318">
    <property type="disease" value="Essential thrombocythemia"/>
</dbReference>
<dbReference type="Orphanet" id="391366">
    <property type="disease" value="Growth retardation-mild developmental delay-chronic hepatitis syndrome"/>
</dbReference>
<dbReference type="PharmGKB" id="PA145148124"/>
<dbReference type="VEuPathDB" id="HostDB:ENSG00000111252"/>
<dbReference type="eggNOG" id="ENOG502QS89">
    <property type="taxonomic scope" value="Eukaryota"/>
</dbReference>
<dbReference type="GeneTree" id="ENSGT00950000183191"/>
<dbReference type="HOGENOM" id="CLU_014885_3_0_1"/>
<dbReference type="InParanoid" id="Q9UQQ2"/>
<dbReference type="OMA" id="WLRSRSM"/>
<dbReference type="OrthoDB" id="10047184at2759"/>
<dbReference type="PAN-GO" id="Q9UQQ2">
    <property type="GO annotations" value="3 GO annotations based on evolutionary models"/>
</dbReference>
<dbReference type="PhylomeDB" id="Q9UQQ2"/>
<dbReference type="TreeFam" id="TF323184"/>
<dbReference type="PathwayCommons" id="Q9UQQ2"/>
<dbReference type="Reactome" id="R-HSA-1433559">
    <property type="pathway name" value="Regulation of KIT signaling"/>
</dbReference>
<dbReference type="Reactome" id="R-HSA-9706369">
    <property type="pathway name" value="Negative regulation of FLT3"/>
</dbReference>
<dbReference type="Reactome" id="R-HSA-983231">
    <property type="pathway name" value="Factors involved in megakaryocyte development and platelet production"/>
</dbReference>
<dbReference type="SignaLink" id="Q9UQQ2"/>
<dbReference type="SIGNOR" id="Q9UQQ2"/>
<dbReference type="BioGRID-ORCS" id="10019">
    <property type="hits" value="18 hits in 1158 CRISPR screens"/>
</dbReference>
<dbReference type="ChiTaRS" id="SH2B3">
    <property type="organism name" value="human"/>
</dbReference>
<dbReference type="GeneWiki" id="SH2B3"/>
<dbReference type="GenomeRNAi" id="10019"/>
<dbReference type="Pharos" id="Q9UQQ2">
    <property type="development level" value="Tbio"/>
</dbReference>
<dbReference type="PRO" id="PR:Q9UQQ2"/>
<dbReference type="Proteomes" id="UP000005640">
    <property type="component" value="Chromosome 12"/>
</dbReference>
<dbReference type="RNAct" id="Q9UQQ2">
    <property type="molecule type" value="protein"/>
</dbReference>
<dbReference type="Bgee" id="ENSG00000111252">
    <property type="expression patterns" value="Expressed in monocyte and 178 other cell types or tissues"/>
</dbReference>
<dbReference type="ExpressionAtlas" id="Q9UQQ2">
    <property type="expression patterns" value="baseline and differential"/>
</dbReference>
<dbReference type="GO" id="GO:0005829">
    <property type="term" value="C:cytosol"/>
    <property type="evidence" value="ECO:0000304"/>
    <property type="project" value="Reactome"/>
</dbReference>
<dbReference type="GO" id="GO:0005886">
    <property type="term" value="C:plasma membrane"/>
    <property type="evidence" value="ECO:0000318"/>
    <property type="project" value="GO_Central"/>
</dbReference>
<dbReference type="GO" id="GO:1990782">
    <property type="term" value="F:protein tyrosine kinase binding"/>
    <property type="evidence" value="ECO:0000250"/>
    <property type="project" value="BHF-UCL"/>
</dbReference>
<dbReference type="GO" id="GO:0030159">
    <property type="term" value="F:signaling receptor complex adaptor activity"/>
    <property type="evidence" value="ECO:0000250"/>
    <property type="project" value="BHF-UCL"/>
</dbReference>
<dbReference type="GO" id="GO:0005173">
    <property type="term" value="F:stem cell factor receptor binding"/>
    <property type="evidence" value="ECO:0000250"/>
    <property type="project" value="BHF-UCL"/>
</dbReference>
<dbReference type="GO" id="GO:0005068">
    <property type="term" value="F:transmembrane receptor protein tyrosine kinase adaptor activity"/>
    <property type="evidence" value="ECO:0000318"/>
    <property type="project" value="GO_Central"/>
</dbReference>
<dbReference type="GO" id="GO:1990869">
    <property type="term" value="P:cellular response to chemokine"/>
    <property type="evidence" value="ECO:0000250"/>
    <property type="project" value="ARUK-UCL"/>
</dbReference>
<dbReference type="GO" id="GO:0036016">
    <property type="term" value="P:cellular response to interleukin-3"/>
    <property type="evidence" value="ECO:0000250"/>
    <property type="project" value="ARUK-UCL"/>
</dbReference>
<dbReference type="GO" id="GO:0035162">
    <property type="term" value="P:embryonic hemopoiesis"/>
    <property type="evidence" value="ECO:0000250"/>
    <property type="project" value="BHF-UCL"/>
</dbReference>
<dbReference type="GO" id="GO:0048821">
    <property type="term" value="P:erythrocyte development"/>
    <property type="evidence" value="ECO:0000315"/>
    <property type="project" value="ARUK-UCL"/>
</dbReference>
<dbReference type="GO" id="GO:0060218">
    <property type="term" value="P:hematopoietic stem cell differentiation"/>
    <property type="evidence" value="ECO:0007669"/>
    <property type="project" value="Ensembl"/>
</dbReference>
<dbReference type="GO" id="GO:0035556">
    <property type="term" value="P:intracellular signal transduction"/>
    <property type="evidence" value="ECO:0000318"/>
    <property type="project" value="GO_Central"/>
</dbReference>
<dbReference type="GO" id="GO:0035855">
    <property type="term" value="P:megakaryocyte development"/>
    <property type="evidence" value="ECO:0000250"/>
    <property type="project" value="ARUK-UCL"/>
</dbReference>
<dbReference type="GO" id="GO:0035702">
    <property type="term" value="P:monocyte homeostasis"/>
    <property type="evidence" value="ECO:0000250"/>
    <property type="project" value="BHF-UCL"/>
</dbReference>
<dbReference type="GO" id="GO:0008285">
    <property type="term" value="P:negative regulation of cell population proliferation"/>
    <property type="evidence" value="ECO:0000250"/>
    <property type="project" value="ARUK-UCL"/>
</dbReference>
<dbReference type="GO" id="GO:0070100">
    <property type="term" value="P:negative regulation of chemokine-mediated signaling pathway"/>
    <property type="evidence" value="ECO:0000250"/>
    <property type="project" value="ARUK-UCL"/>
</dbReference>
<dbReference type="GO" id="GO:1900235">
    <property type="term" value="P:negative regulation of Kit signaling pathway"/>
    <property type="evidence" value="ECO:0000250"/>
    <property type="project" value="BHF-UCL"/>
</dbReference>
<dbReference type="GO" id="GO:0043409">
    <property type="term" value="P:negative regulation of MAPK cascade"/>
    <property type="evidence" value="ECO:0000250"/>
    <property type="project" value="ARUK-UCL"/>
</dbReference>
<dbReference type="GO" id="GO:0051898">
    <property type="term" value="P:negative regulation of phosphatidylinositol 3-kinase/protein kinase B signal transduction"/>
    <property type="evidence" value="ECO:0000250"/>
    <property type="project" value="ARUK-UCL"/>
</dbReference>
<dbReference type="GO" id="GO:0090331">
    <property type="term" value="P:negative regulation of platelet aggregation"/>
    <property type="evidence" value="ECO:0000250"/>
    <property type="project" value="BHF-UCL"/>
</dbReference>
<dbReference type="GO" id="GO:0046426">
    <property type="term" value="P:negative regulation of receptor signaling pathway via JAK-STAT"/>
    <property type="evidence" value="ECO:0000315"/>
    <property type="project" value="ARUK-UCL"/>
</dbReference>
<dbReference type="GO" id="GO:1904893">
    <property type="term" value="P:negative regulation of receptor signaling pathway via STAT"/>
    <property type="evidence" value="ECO:0000250"/>
    <property type="project" value="ARUK-UCL"/>
</dbReference>
<dbReference type="GO" id="GO:0060761">
    <property type="term" value="P:negative regulation of response to cytokine stimulus"/>
    <property type="evidence" value="ECO:0000315"/>
    <property type="project" value="ARUK-UCL"/>
</dbReference>
<dbReference type="GO" id="GO:0001780">
    <property type="term" value="P:neutrophil homeostasis"/>
    <property type="evidence" value="ECO:0000250"/>
    <property type="project" value="BHF-UCL"/>
</dbReference>
<dbReference type="GO" id="GO:0038163">
    <property type="term" value="P:thrombopoietin-mediated signaling pathway"/>
    <property type="evidence" value="ECO:0000314"/>
    <property type="project" value="ARUK-UCL"/>
</dbReference>
<dbReference type="CDD" id="cd01231">
    <property type="entry name" value="PH_SH2B_family"/>
    <property type="match status" value="1"/>
</dbReference>
<dbReference type="CDD" id="cd10412">
    <property type="entry name" value="SH2_SH2B3"/>
    <property type="match status" value="1"/>
</dbReference>
<dbReference type="FunFam" id="3.30.505.10:FF:000008">
    <property type="entry name" value="SH2B adapter protein 1 isoform 2"/>
    <property type="match status" value="1"/>
</dbReference>
<dbReference type="FunFam" id="2.30.29.30:FF:000299">
    <property type="entry name" value="SH2B adapter protein 3 isoform X2"/>
    <property type="match status" value="1"/>
</dbReference>
<dbReference type="Gene3D" id="6.10.140.110">
    <property type="match status" value="1"/>
</dbReference>
<dbReference type="Gene3D" id="2.30.29.30">
    <property type="entry name" value="Pleckstrin-homology domain (PH domain)/Phosphotyrosine-binding domain (PTB)"/>
    <property type="match status" value="1"/>
</dbReference>
<dbReference type="Gene3D" id="3.30.505.10">
    <property type="entry name" value="SH2 domain"/>
    <property type="match status" value="1"/>
</dbReference>
<dbReference type="InterPro" id="IPR011993">
    <property type="entry name" value="PH-like_dom_sf"/>
</dbReference>
<dbReference type="InterPro" id="IPR001849">
    <property type="entry name" value="PH_domain"/>
</dbReference>
<dbReference type="InterPro" id="IPR015012">
    <property type="entry name" value="Phe_ZIP"/>
</dbReference>
<dbReference type="InterPro" id="IPR036290">
    <property type="entry name" value="Phe_ZIP_sf"/>
</dbReference>
<dbReference type="InterPro" id="IPR000980">
    <property type="entry name" value="SH2"/>
</dbReference>
<dbReference type="InterPro" id="IPR036860">
    <property type="entry name" value="SH2_dom_sf"/>
</dbReference>
<dbReference type="InterPro" id="IPR030523">
    <property type="entry name" value="SH2B"/>
</dbReference>
<dbReference type="InterPro" id="IPR035059">
    <property type="entry name" value="SH2B3_SH2"/>
</dbReference>
<dbReference type="PANTHER" id="PTHR10872">
    <property type="entry name" value="SH2B ADAPTER PROTEIN"/>
    <property type="match status" value="1"/>
</dbReference>
<dbReference type="PANTHER" id="PTHR10872:SF1">
    <property type="entry name" value="SH2B ADAPTER PROTEIN 3"/>
    <property type="match status" value="1"/>
</dbReference>
<dbReference type="Pfam" id="PF08916">
    <property type="entry name" value="Phe_ZIP"/>
    <property type="match status" value="1"/>
</dbReference>
<dbReference type="Pfam" id="PF00017">
    <property type="entry name" value="SH2"/>
    <property type="match status" value="1"/>
</dbReference>
<dbReference type="PRINTS" id="PR00401">
    <property type="entry name" value="SH2DOMAIN"/>
</dbReference>
<dbReference type="SMART" id="SM00233">
    <property type="entry name" value="PH"/>
    <property type="match status" value="1"/>
</dbReference>
<dbReference type="SMART" id="SM00252">
    <property type="entry name" value="SH2"/>
    <property type="match status" value="1"/>
</dbReference>
<dbReference type="SUPFAM" id="SSF50729">
    <property type="entry name" value="PH domain-like"/>
    <property type="match status" value="1"/>
</dbReference>
<dbReference type="SUPFAM" id="SSF109805">
    <property type="entry name" value="Phenylalanine zipper"/>
    <property type="match status" value="1"/>
</dbReference>
<dbReference type="SUPFAM" id="SSF55550">
    <property type="entry name" value="SH2 domain"/>
    <property type="match status" value="1"/>
</dbReference>
<dbReference type="PROSITE" id="PS50001">
    <property type="entry name" value="SH2"/>
    <property type="match status" value="1"/>
</dbReference>
<organism>
    <name type="scientific">Homo sapiens</name>
    <name type="common">Human</name>
    <dbReference type="NCBI Taxonomy" id="9606"/>
    <lineage>
        <taxon>Eukaryota</taxon>
        <taxon>Metazoa</taxon>
        <taxon>Chordata</taxon>
        <taxon>Craniata</taxon>
        <taxon>Vertebrata</taxon>
        <taxon>Euteleostomi</taxon>
        <taxon>Mammalia</taxon>
        <taxon>Eutheria</taxon>
        <taxon>Euarchontoglires</taxon>
        <taxon>Primates</taxon>
        <taxon>Haplorrhini</taxon>
        <taxon>Catarrhini</taxon>
        <taxon>Hominidae</taxon>
        <taxon>Homo</taxon>
    </lineage>
</organism>
<feature type="chain" id="PRO_0000084454" description="SH2B adapter protein 3">
    <location>
        <begin position="1"/>
        <end position="575"/>
    </location>
</feature>
<feature type="domain" description="PH">
    <location>
        <begin position="194"/>
        <end position="307"/>
    </location>
</feature>
<feature type="domain" description="SH2" evidence="3">
    <location>
        <begin position="364"/>
        <end position="462"/>
    </location>
</feature>
<feature type="region of interest" description="Disordered" evidence="4">
    <location>
        <begin position="1"/>
        <end position="23"/>
    </location>
</feature>
<feature type="region of interest" description="Disordered" evidence="4">
    <location>
        <begin position="83"/>
        <end position="136"/>
    </location>
</feature>
<feature type="region of interest" description="Disordered" evidence="4">
    <location>
        <begin position="150"/>
        <end position="176"/>
    </location>
</feature>
<feature type="region of interest" description="Disordered" evidence="4">
    <location>
        <begin position="322"/>
        <end position="346"/>
    </location>
</feature>
<feature type="region of interest" description="Disordered" evidence="4">
    <location>
        <begin position="503"/>
        <end position="525"/>
    </location>
</feature>
<feature type="region of interest" description="Disordered" evidence="4">
    <location>
        <begin position="546"/>
        <end position="575"/>
    </location>
</feature>
<feature type="compositionally biased region" description="Basic and acidic residues" evidence="4">
    <location>
        <begin position="83"/>
        <end position="93"/>
    </location>
</feature>
<feature type="compositionally biased region" description="Low complexity" evidence="4">
    <location>
        <begin position="95"/>
        <end position="104"/>
    </location>
</feature>
<feature type="compositionally biased region" description="Low complexity" evidence="4">
    <location>
        <begin position="152"/>
        <end position="174"/>
    </location>
</feature>
<feature type="compositionally biased region" description="Low complexity" evidence="4">
    <location>
        <begin position="325"/>
        <end position="337"/>
    </location>
</feature>
<feature type="modified residue" description="Phosphoserine" evidence="2">
    <location>
        <position position="13"/>
    </location>
</feature>
<feature type="modified residue" description="Phosphoserine" evidence="10">
    <location>
        <position position="103"/>
    </location>
</feature>
<feature type="modified residue" description="Phosphoserine" evidence="10">
    <location>
        <position position="120"/>
    </location>
</feature>
<feature type="modified residue" description="Phosphoserine" evidence="9 10">
    <location>
        <position position="150"/>
    </location>
</feature>
<feature type="modified residue" description="Phosphoserine" evidence="2">
    <location>
        <position position="330"/>
    </location>
</feature>
<feature type="sequence variant" id="VAR_046210" description="In dbSNP:rs7972796.">
    <original>F</original>
    <variation>L</variation>
    <location>
        <position position="182"/>
    </location>
</feature>
<feature type="sequence variant" id="VAR_080828" description="Found in a patient with isolated erythrocytosis; uncertain significance." evidence="7">
    <location>
        <begin position="208"/>
        <end position="575"/>
    </location>
</feature>
<feature type="sequence variant" id="VAR_080829" description="Found in a patient with isolated erythrocytosis; uncertain significance." evidence="7">
    <original>A</original>
    <variation>V</variation>
    <location>
        <position position="215"/>
    </location>
</feature>
<feature type="sequence variant" id="VAR_024168" description="Risk factor for CELIAC13; risk factor for T1D; dbSNP:rs3184504." evidence="5 6">
    <original>W</original>
    <variation>R</variation>
    <location>
        <position position="262"/>
    </location>
</feature>
<feature type="sequence conflict" description="In Ref. 2; CAB42642." evidence="8" ref="2">
    <original>G</original>
    <variation>GR</variation>
    <location>
        <position position="309"/>
    </location>
</feature>
<feature type="sequence conflict" description="In Ref. 2; CAB42642." evidence="8" ref="2">
    <original>H</original>
    <variation>P</variation>
    <location>
        <position position="491"/>
    </location>
</feature>
<protein>
    <recommendedName>
        <fullName>SH2B adapter protein 3</fullName>
    </recommendedName>
    <alternativeName>
        <fullName>Lymphocyte adapter protein</fullName>
    </alternativeName>
    <alternativeName>
        <fullName>Lymphocyte-specific adapter protein Lnk</fullName>
    </alternativeName>
    <alternativeName>
        <fullName>Signal transduction protein Lnk</fullName>
    </alternativeName>
</protein>
<sequence length="575" mass="63225">MNGPALQPSSPSSAPSASPAAAPRGWSEFCELHAVAAARELARQYWLFAREHPQHAPLRAELVSLQFTDLFQRYFCREVRDGRAPGRDYRDTGRGPPAKAEASPEPGPGPAAPGLPKARSSEELAPPRPPGPCSFQHFRRSLRHIFRRRSAGELPAAHTAAAPGTPGEAAETPARPGLAKKFLPWSLAREPPPEALKEAVLRYSLADEASMDSGARWQRGRLALRRAPGPDGPDRVLELFDPPKSSRPKLQAACSSIQEVRWCTRLEMPDNLYTFVLKVKDRTDIIFEVGDEQQLNSWMAELSECTGRGLESTEAEMHIPSALEPSTSSSPRGSTDSLNQGASPGGLLDPACQKTDHFLSCYPWFHGPISRVKAAQLVQLQGPDAHGVFLVRQSETRRGEYVLTFNFQGIAKHLRLSLTERGQCRVQHLHFPSVVDMLHHFQRSPIPLECGAACDVRLSSYVVVVSQPPGSCNTVLFPFSLPHWDSESLPHWGSELGLPHLSSSGCPRGLSPEGLPGRSSPPEQIFHLVPSPEELANSLQHLEHEPVNRARDSDYEMDSSSRSHLRAIDNQYTPL</sequence>
<name>SH2B3_HUMAN</name>
<reference key="1">
    <citation type="journal article" date="2000" name="J. Immunol.">
        <title>Cloning and characterization of human Lnk, an adaptor protein with pleckstrin homology and Src homology 2 domains that can inhibit T cell activation.</title>
        <authorList>
            <person name="Li Y."/>
            <person name="He X."/>
            <person name="Schembri-King J."/>
            <person name="Jakes S."/>
            <person name="Hayashi J."/>
        </authorList>
    </citation>
    <scope>NUCLEOTIDE SEQUENCE [MRNA]</scope>
</reference>
<reference key="2">
    <citation type="submission" date="1998-11" db="EMBL/GenBank/DDBJ databases">
        <title>Characterisation of human Lnk a lymphocyte adaptor protein with a multiple domain structure.</title>
        <authorList>
            <person name="Bartholomew M.A."/>
            <person name="Morse M.A."/>
            <person name="Vivier R.G."/>
            <person name="Blanchard A.D."/>
            <person name="Boyhan A."/>
            <person name="Tite J.P."/>
            <person name="Fuller K.J."/>
            <person name="Lewis A.P."/>
            <person name="Sims M.J."/>
        </authorList>
    </citation>
    <scope>NUCLEOTIDE SEQUENCE [MRNA]</scope>
</reference>
<reference key="3">
    <citation type="submission" date="2005-07" db="EMBL/GenBank/DDBJ databases">
        <authorList>
            <person name="Mural R.J."/>
            <person name="Istrail S."/>
            <person name="Sutton G.G."/>
            <person name="Florea L."/>
            <person name="Halpern A.L."/>
            <person name="Mobarry C.M."/>
            <person name="Lippert R."/>
            <person name="Walenz B."/>
            <person name="Shatkay H."/>
            <person name="Dew I."/>
            <person name="Miller J.R."/>
            <person name="Flanigan M.J."/>
            <person name="Edwards N.J."/>
            <person name="Bolanos R."/>
            <person name="Fasulo D."/>
            <person name="Halldorsson B.V."/>
            <person name="Hannenhalli S."/>
            <person name="Turner R."/>
            <person name="Yooseph S."/>
            <person name="Lu F."/>
            <person name="Nusskern D.R."/>
            <person name="Shue B.C."/>
            <person name="Zheng X.H."/>
            <person name="Zhong F."/>
            <person name="Delcher A.L."/>
            <person name="Huson D.H."/>
            <person name="Kravitz S.A."/>
            <person name="Mouchard L."/>
            <person name="Reinert K."/>
            <person name="Remington K.A."/>
            <person name="Clark A.G."/>
            <person name="Waterman M.S."/>
            <person name="Eichler E.E."/>
            <person name="Adams M.D."/>
            <person name="Hunkapiller M.W."/>
            <person name="Myers E.W."/>
            <person name="Venter J.C."/>
        </authorList>
    </citation>
    <scope>NUCLEOTIDE SEQUENCE [LARGE SCALE GENOMIC DNA]</scope>
</reference>
<reference key="4">
    <citation type="journal article" date="2004" name="Genome Res.">
        <title>The status, quality, and expansion of the NIH full-length cDNA project: the Mammalian Gene Collection (MGC).</title>
        <authorList>
            <consortium name="The MGC Project Team"/>
        </authorList>
    </citation>
    <scope>NUCLEOTIDE SEQUENCE [LARGE SCALE MRNA]</scope>
    <source>
        <tissue>Brain</tissue>
    </source>
</reference>
<reference key="5">
    <citation type="journal article" date="2007" name="Nat. Genet.">
        <title>Robust associations of four new chromosome regions from genome-wide analyses of type 1 diabetes.</title>
        <authorList>
            <consortium name="Genetics of type 1 diabetes in Finland"/>
            <consortium name="The Wellcome Trust case control consortium"/>
            <person name="Todd J.A."/>
            <person name="Walker N.M."/>
            <person name="Cooper J.D."/>
            <person name="Smyth D.J."/>
            <person name="Downes K."/>
            <person name="Plagnol V."/>
            <person name="Bailey R."/>
            <person name="Nejentsev S."/>
            <person name="Field S.F."/>
            <person name="Payne F."/>
            <person name="Lowe C.E."/>
            <person name="Szeszko J.S."/>
            <person name="Hafler J.P."/>
            <person name="Zeitels L."/>
            <person name="Yang J.H.M."/>
            <person name="Vella A."/>
            <person name="Nutland S."/>
            <person name="Stevens H.E."/>
            <person name="Schuilenburg H."/>
            <person name="Coleman G."/>
            <person name="Maisuria M."/>
            <person name="Meadows W."/>
            <person name="Smink L.J."/>
            <person name="Healy B."/>
            <person name="Burren O.S."/>
            <person name="Lam A.A.C."/>
            <person name="Ovington N.R."/>
            <person name="Allen J."/>
            <person name="Adlem E."/>
            <person name="Leung H.-T."/>
            <person name="Wallace C."/>
            <person name="Howson J.M.M."/>
            <person name="Guja C."/>
            <person name="Ionescu-Tirgoviste C."/>
            <person name="Simmonds M.J."/>
            <person name="Heward J.M."/>
            <person name="Gough S.C.L."/>
            <person name="Dunger D.B."/>
            <person name="Wicker L.S."/>
            <person name="Clayton D.G."/>
        </authorList>
    </citation>
    <scope>INVOLVEMENT IN SUSCEPTIBILITY TO T1D</scope>
    <scope>VARIANT ARG-262</scope>
</reference>
<reference key="6">
    <citation type="journal article" date="2008" name="Nat. Genet.">
        <title>Newly identified genetic risk variants for celiac disease related to the immune response.</title>
        <authorList>
            <person name="Hunt K.A."/>
            <person name="Zhernakova A."/>
            <person name="Turner G."/>
            <person name="Heap G.A.R."/>
            <person name="Franke L."/>
            <person name="Bruinenberg M."/>
            <person name="Romanos J."/>
            <person name="Dinesen L.C."/>
            <person name="Ryan A.W."/>
            <person name="Panesar D."/>
            <person name="Gwilliam R."/>
            <person name="Takeuchi F."/>
            <person name="McLaren W.M."/>
            <person name="Holmes G.K.T."/>
            <person name="Howdle P.D."/>
            <person name="Walters J.R.F."/>
            <person name="Sanders D.S."/>
            <person name="Playford R.J."/>
            <person name="Trynka G."/>
            <person name="Mulder C.J."/>
            <person name="Mearin M.L."/>
            <person name="Verbeek W.H.M."/>
            <person name="Trimble V."/>
            <person name="Stevens F.M."/>
            <person name="O'Morain C."/>
            <person name="Kennedy N.P."/>
            <person name="Kelleher D."/>
            <person name="Pennington D.J."/>
            <person name="Strachan D.P."/>
            <person name="McArdle W.L."/>
            <person name="Mein C.A."/>
            <person name="Wapenaar M.C."/>
            <person name="Deloukas P."/>
            <person name="McGinnis R."/>
            <person name="McManus R."/>
            <person name="Wijmenga C."/>
            <person name="van Heel D.A."/>
        </authorList>
    </citation>
    <scope>INVOLVEMENT IN SUSCEPTIBILITY TO CELIAC13</scope>
    <scope>VARIANT ARG-262</scope>
</reference>
<reference key="7">
    <citation type="journal article" date="2011" name="Sci. Signal.">
        <title>System-wide temporal characterization of the proteome and phosphoproteome of human embryonic stem cell differentiation.</title>
        <authorList>
            <person name="Rigbolt K.T."/>
            <person name="Prokhorova T.A."/>
            <person name="Akimov V."/>
            <person name="Henningsen J."/>
            <person name="Johansen P.T."/>
            <person name="Kratchmarova I."/>
            <person name="Kassem M."/>
            <person name="Mann M."/>
            <person name="Olsen J.V."/>
            <person name="Blagoev B."/>
        </authorList>
    </citation>
    <scope>PHOSPHORYLATION [LARGE SCALE ANALYSIS] AT SER-150</scope>
    <scope>IDENTIFICATION BY MASS SPECTROMETRY [LARGE SCALE ANALYSIS]</scope>
</reference>
<reference key="8">
    <citation type="journal article" date="2013" name="J. Proteome Res.">
        <title>Toward a comprehensive characterization of a human cancer cell phosphoproteome.</title>
        <authorList>
            <person name="Zhou H."/>
            <person name="Di Palma S."/>
            <person name="Preisinger C."/>
            <person name="Peng M."/>
            <person name="Polat A.N."/>
            <person name="Heck A.J."/>
            <person name="Mohammed S."/>
        </authorList>
    </citation>
    <scope>PHOSPHORYLATION [LARGE SCALE ANALYSIS] AT SER-103; SER-120 AND SER-150</scope>
    <scope>IDENTIFICATION BY MASS SPECTROMETRY [LARGE SCALE ANALYSIS]</scope>
    <source>
        <tissue>Erythroleukemia</tissue>
    </source>
</reference>
<reference key="9">
    <citation type="journal article" date="2010" name="N. Engl. J. Med.">
        <title>LNK mutations in JAK2 mutation-negative erythrocytosis.</title>
        <authorList>
            <person name="Lasho T.L."/>
            <person name="Pardanani A."/>
            <person name="Tefferi A."/>
        </authorList>
    </citation>
    <scope>VARIANTS 208-GLU--LEU-575 DEL AND VAL-215</scope>
</reference>